<name>CCMA_RICTY</name>
<keyword id="KW-0067">ATP-binding</keyword>
<keyword id="KW-0997">Cell inner membrane</keyword>
<keyword id="KW-1003">Cell membrane</keyword>
<keyword id="KW-0201">Cytochrome c-type biogenesis</keyword>
<keyword id="KW-0472">Membrane</keyword>
<keyword id="KW-0547">Nucleotide-binding</keyword>
<keyword id="KW-1278">Translocase</keyword>
<keyword id="KW-0813">Transport</keyword>
<organism>
    <name type="scientific">Rickettsia typhi (strain ATCC VR-144 / Wilmington)</name>
    <dbReference type="NCBI Taxonomy" id="257363"/>
    <lineage>
        <taxon>Bacteria</taxon>
        <taxon>Pseudomonadati</taxon>
        <taxon>Pseudomonadota</taxon>
        <taxon>Alphaproteobacteria</taxon>
        <taxon>Rickettsiales</taxon>
        <taxon>Rickettsiaceae</taxon>
        <taxon>Rickettsieae</taxon>
        <taxon>Rickettsia</taxon>
        <taxon>typhus group</taxon>
    </lineage>
</organism>
<comment type="function">
    <text evidence="1">Part of the ABC transporter complex CcmAB involved in the biogenesis of c-type cytochromes; once thought to export heme, this seems not to be the case, but its exact role is uncertain. Responsible for energy coupling to the transport system.</text>
</comment>
<comment type="catalytic activity">
    <reaction evidence="1">
        <text>heme b(in) + ATP + H2O = heme b(out) + ADP + phosphate + H(+)</text>
        <dbReference type="Rhea" id="RHEA:19261"/>
        <dbReference type="ChEBI" id="CHEBI:15377"/>
        <dbReference type="ChEBI" id="CHEBI:15378"/>
        <dbReference type="ChEBI" id="CHEBI:30616"/>
        <dbReference type="ChEBI" id="CHEBI:43474"/>
        <dbReference type="ChEBI" id="CHEBI:60344"/>
        <dbReference type="ChEBI" id="CHEBI:456216"/>
        <dbReference type="EC" id="7.6.2.5"/>
    </reaction>
</comment>
<comment type="subunit">
    <text evidence="1">The complex is composed of two ATP-binding proteins (CcmA) and two transmembrane proteins (CcmB).</text>
</comment>
<comment type="subcellular location">
    <subcellularLocation>
        <location evidence="1">Cell inner membrane</location>
        <topology evidence="1">Peripheral membrane protein</topology>
    </subcellularLocation>
</comment>
<comment type="similarity">
    <text evidence="1">Belongs to the ABC transporter superfamily. CcmA exporter (TC 3.A.1.107) family.</text>
</comment>
<sequence length="197" mass="22280">MSMLSLHQLQLNIEKRNLFDLCITFLPSAITYIKGANGSGKSSLLRMIAGIMQPSSGNIYYKNSHINNCQKPYCTYIGHNLGIKLEMTVFENLKFWSEIYNSTETVQAAIHYFKLDYLLDKKCYNLSSGIQKVVAIARLIVCKSDLWLLDEVETNLSKENRDLLNNLIIMKANSGGIILLSSHQESVIKSAQILQLK</sequence>
<feature type="chain" id="PRO_0000092208" description="Cytochrome c biogenesis ATP-binding export protein CcmA">
    <location>
        <begin position="1"/>
        <end position="197"/>
    </location>
</feature>
<feature type="domain" description="ABC transporter" evidence="1">
    <location>
        <begin position="1"/>
        <end position="196"/>
    </location>
</feature>
<feature type="binding site" evidence="1">
    <location>
        <begin position="35"/>
        <end position="42"/>
    </location>
    <ligand>
        <name>ATP</name>
        <dbReference type="ChEBI" id="CHEBI:30616"/>
    </ligand>
</feature>
<proteinExistence type="inferred from homology"/>
<reference key="1">
    <citation type="journal article" date="2004" name="J. Bacteriol.">
        <title>Complete genome sequence of Rickettsia typhi and comparison with sequences of other Rickettsiae.</title>
        <authorList>
            <person name="McLeod M.P."/>
            <person name="Qin X."/>
            <person name="Karpathy S.E."/>
            <person name="Gioia J."/>
            <person name="Highlander S.K."/>
            <person name="Fox G.E."/>
            <person name="McNeill T.Z."/>
            <person name="Jiang H."/>
            <person name="Muzny D."/>
            <person name="Jacob L.S."/>
            <person name="Hawes A.C."/>
            <person name="Sodergren E."/>
            <person name="Gill R."/>
            <person name="Hume J."/>
            <person name="Morgan M."/>
            <person name="Fan G."/>
            <person name="Amin A.G."/>
            <person name="Gibbs R.A."/>
            <person name="Hong C."/>
            <person name="Yu X.-J."/>
            <person name="Walker D.H."/>
            <person name="Weinstock G.M."/>
        </authorList>
    </citation>
    <scope>NUCLEOTIDE SEQUENCE [LARGE SCALE GENOMIC DNA]</scope>
    <source>
        <strain>ATCC VR-144 / Wilmington</strain>
    </source>
</reference>
<evidence type="ECO:0000255" key="1">
    <source>
        <dbReference type="HAMAP-Rule" id="MF_01707"/>
    </source>
</evidence>
<dbReference type="EC" id="7.6.2.5" evidence="1"/>
<dbReference type="EMBL" id="AE017197">
    <property type="protein sequence ID" value="AAU04237.1"/>
    <property type="molecule type" value="Genomic_DNA"/>
</dbReference>
<dbReference type="RefSeq" id="WP_011191212.1">
    <property type="nucleotide sequence ID" value="NC_006142.1"/>
</dbReference>
<dbReference type="SMR" id="Q68VV5"/>
<dbReference type="KEGG" id="rty:RT0781"/>
<dbReference type="eggNOG" id="COG4133">
    <property type="taxonomic scope" value="Bacteria"/>
</dbReference>
<dbReference type="HOGENOM" id="CLU_000604_1_2_5"/>
<dbReference type="OrthoDB" id="9800654at2"/>
<dbReference type="Proteomes" id="UP000000604">
    <property type="component" value="Chromosome"/>
</dbReference>
<dbReference type="GO" id="GO:0005886">
    <property type="term" value="C:plasma membrane"/>
    <property type="evidence" value="ECO:0007669"/>
    <property type="project" value="UniProtKB-SubCell"/>
</dbReference>
<dbReference type="GO" id="GO:0015439">
    <property type="term" value="F:ABC-type heme transporter activity"/>
    <property type="evidence" value="ECO:0007669"/>
    <property type="project" value="UniProtKB-EC"/>
</dbReference>
<dbReference type="GO" id="GO:0005524">
    <property type="term" value="F:ATP binding"/>
    <property type="evidence" value="ECO:0007669"/>
    <property type="project" value="UniProtKB-KW"/>
</dbReference>
<dbReference type="GO" id="GO:0016887">
    <property type="term" value="F:ATP hydrolysis activity"/>
    <property type="evidence" value="ECO:0007669"/>
    <property type="project" value="InterPro"/>
</dbReference>
<dbReference type="GO" id="GO:0017004">
    <property type="term" value="P:cytochrome complex assembly"/>
    <property type="evidence" value="ECO:0007669"/>
    <property type="project" value="UniProtKB-KW"/>
</dbReference>
<dbReference type="Gene3D" id="3.40.50.300">
    <property type="entry name" value="P-loop containing nucleotide triphosphate hydrolases"/>
    <property type="match status" value="1"/>
</dbReference>
<dbReference type="InterPro" id="IPR003439">
    <property type="entry name" value="ABC_transporter-like_ATP-bd"/>
</dbReference>
<dbReference type="InterPro" id="IPR005895">
    <property type="entry name" value="ABC_transptr_haem_export_CcmA"/>
</dbReference>
<dbReference type="InterPro" id="IPR027417">
    <property type="entry name" value="P-loop_NTPase"/>
</dbReference>
<dbReference type="NCBIfam" id="TIGR01189">
    <property type="entry name" value="ccmA"/>
    <property type="match status" value="1"/>
</dbReference>
<dbReference type="NCBIfam" id="NF010063">
    <property type="entry name" value="PRK13541.1"/>
    <property type="match status" value="1"/>
</dbReference>
<dbReference type="PANTHER" id="PTHR43499">
    <property type="entry name" value="ABC TRANSPORTER I FAMILY MEMBER 1"/>
    <property type="match status" value="1"/>
</dbReference>
<dbReference type="PANTHER" id="PTHR43499:SF1">
    <property type="entry name" value="ABC TRANSPORTER I FAMILY MEMBER 1"/>
    <property type="match status" value="1"/>
</dbReference>
<dbReference type="Pfam" id="PF00005">
    <property type="entry name" value="ABC_tran"/>
    <property type="match status" value="1"/>
</dbReference>
<dbReference type="SUPFAM" id="SSF52540">
    <property type="entry name" value="P-loop containing nucleoside triphosphate hydrolases"/>
    <property type="match status" value="1"/>
</dbReference>
<dbReference type="PROSITE" id="PS50893">
    <property type="entry name" value="ABC_TRANSPORTER_2"/>
    <property type="match status" value="1"/>
</dbReference>
<dbReference type="PROSITE" id="PS51243">
    <property type="entry name" value="CCMA"/>
    <property type="match status" value="1"/>
</dbReference>
<protein>
    <recommendedName>
        <fullName evidence="1">Cytochrome c biogenesis ATP-binding export protein CcmA</fullName>
        <ecNumber evidence="1">7.6.2.5</ecNumber>
    </recommendedName>
    <alternativeName>
        <fullName evidence="1">Heme exporter protein A</fullName>
    </alternativeName>
</protein>
<accession>Q68VV5</accession>
<gene>
    <name evidence="1" type="primary">ccmA</name>
    <name type="ordered locus">RT0781</name>
</gene>